<proteinExistence type="inferred from homology"/>
<evidence type="ECO:0000250" key="1"/>
<evidence type="ECO:0000255" key="2">
    <source>
        <dbReference type="PROSITE-ProRule" id="PRU00159"/>
    </source>
</evidence>
<evidence type="ECO:0000255" key="3">
    <source>
        <dbReference type="PROSITE-ProRule" id="PRU10027"/>
    </source>
</evidence>
<evidence type="ECO:0000305" key="4"/>
<organism>
    <name type="scientific">Yarrowia lipolytica (strain CLIB 122 / E 150)</name>
    <name type="common">Yeast</name>
    <name type="synonym">Candida lipolytica</name>
    <dbReference type="NCBI Taxonomy" id="284591"/>
    <lineage>
        <taxon>Eukaryota</taxon>
        <taxon>Fungi</taxon>
        <taxon>Dikarya</taxon>
        <taxon>Ascomycota</taxon>
        <taxon>Saccharomycotina</taxon>
        <taxon>Dipodascomycetes</taxon>
        <taxon>Dipodascales</taxon>
        <taxon>Dipodascales incertae sedis</taxon>
        <taxon>Yarrowia</taxon>
    </lineage>
</organism>
<keyword id="KW-0067">ATP-binding</keyword>
<keyword id="KW-0418">Kinase</keyword>
<keyword id="KW-0547">Nucleotide-binding</keyword>
<keyword id="KW-1185">Reference proteome</keyword>
<keyword id="KW-0723">Serine/threonine-protein kinase</keyword>
<keyword id="KW-0808">Transferase</keyword>
<accession>Q6C7U8</accession>
<sequence>MNTSSQFQQLEKLGEGTYATVYKGRNRTTGQLVALKEINLDSEEGTPSTAIREISLMKELKHENIVTLYDVIHTENKLNLVFEYMDKDLKKFMDTNGNKGALETKQVKWFMYQLLRGILFCHDNRVLHRDLKPQNLLINAKGQLKLADFGLARAFGIPVNTFSNEVVTLWYRAPDVLLGSRTYSTSIDIWSAGCIMAEMFTGRPLFPGSSNDDQLQHIFKLMGTPNESTWPNISSLPNYRSNFQVYAPQDLRVIIPQIDNVALDLLLSLLQLKPENRITARQSLEHPWFAEYHQ</sequence>
<reference key="1">
    <citation type="journal article" date="2004" name="Nature">
        <title>Genome evolution in yeasts.</title>
        <authorList>
            <person name="Dujon B."/>
            <person name="Sherman D."/>
            <person name="Fischer G."/>
            <person name="Durrens P."/>
            <person name="Casaregola S."/>
            <person name="Lafontaine I."/>
            <person name="de Montigny J."/>
            <person name="Marck C."/>
            <person name="Neuveglise C."/>
            <person name="Talla E."/>
            <person name="Goffard N."/>
            <person name="Frangeul L."/>
            <person name="Aigle M."/>
            <person name="Anthouard V."/>
            <person name="Babour A."/>
            <person name="Barbe V."/>
            <person name="Barnay S."/>
            <person name="Blanchin S."/>
            <person name="Beckerich J.-M."/>
            <person name="Beyne E."/>
            <person name="Bleykasten C."/>
            <person name="Boisrame A."/>
            <person name="Boyer J."/>
            <person name="Cattolico L."/>
            <person name="Confanioleri F."/>
            <person name="de Daruvar A."/>
            <person name="Despons L."/>
            <person name="Fabre E."/>
            <person name="Fairhead C."/>
            <person name="Ferry-Dumazet H."/>
            <person name="Groppi A."/>
            <person name="Hantraye F."/>
            <person name="Hennequin C."/>
            <person name="Jauniaux N."/>
            <person name="Joyet P."/>
            <person name="Kachouri R."/>
            <person name="Kerrest A."/>
            <person name="Koszul R."/>
            <person name="Lemaire M."/>
            <person name="Lesur I."/>
            <person name="Ma L."/>
            <person name="Muller H."/>
            <person name="Nicaud J.-M."/>
            <person name="Nikolski M."/>
            <person name="Oztas S."/>
            <person name="Ozier-Kalogeropoulos O."/>
            <person name="Pellenz S."/>
            <person name="Potier S."/>
            <person name="Richard G.-F."/>
            <person name="Straub M.-L."/>
            <person name="Suleau A."/>
            <person name="Swennen D."/>
            <person name="Tekaia F."/>
            <person name="Wesolowski-Louvel M."/>
            <person name="Westhof E."/>
            <person name="Wirth B."/>
            <person name="Zeniou-Meyer M."/>
            <person name="Zivanovic Y."/>
            <person name="Bolotin-Fukuhara M."/>
            <person name="Thierry A."/>
            <person name="Bouchier C."/>
            <person name="Caudron B."/>
            <person name="Scarpelli C."/>
            <person name="Gaillardin C."/>
            <person name="Weissenbach J."/>
            <person name="Wincker P."/>
            <person name="Souciet J.-L."/>
        </authorList>
    </citation>
    <scope>NUCLEOTIDE SEQUENCE [LARGE SCALE GENOMIC DNA]</scope>
    <source>
        <strain>CLIB 122 / E 150</strain>
    </source>
</reference>
<feature type="chain" id="PRO_0000086520" description="Negative regulator of the PHO system">
    <location>
        <begin position="1"/>
        <end position="294"/>
    </location>
</feature>
<feature type="domain" description="Protein kinase" evidence="2">
    <location>
        <begin position="7"/>
        <end position="289"/>
    </location>
</feature>
<feature type="active site" description="Proton acceptor" evidence="2 3">
    <location>
        <position position="130"/>
    </location>
</feature>
<feature type="binding site" evidence="2">
    <location>
        <begin position="13"/>
        <end position="21"/>
    </location>
    <ligand>
        <name>ATP</name>
        <dbReference type="ChEBI" id="CHEBI:30616"/>
    </ligand>
</feature>
<feature type="binding site" evidence="2">
    <location>
        <position position="36"/>
    </location>
    <ligand>
        <name>ATP</name>
        <dbReference type="ChEBI" id="CHEBI:30616"/>
    </ligand>
</feature>
<gene>
    <name type="primary">PHO85</name>
    <name type="ordered locus">YALI0D25190g</name>
</gene>
<dbReference type="EC" id="2.7.11.22"/>
<dbReference type="EMBL" id="CR382130">
    <property type="protein sequence ID" value="CAG81468.1"/>
    <property type="molecule type" value="Genomic_DNA"/>
</dbReference>
<dbReference type="RefSeq" id="XP_503264.1">
    <property type="nucleotide sequence ID" value="XM_503264.1"/>
</dbReference>
<dbReference type="SMR" id="Q6C7U8"/>
<dbReference type="FunCoup" id="Q6C7U8">
    <property type="interactions" value="414"/>
</dbReference>
<dbReference type="STRING" id="284591.Q6C7U8"/>
<dbReference type="EnsemblFungi" id="CAG81468">
    <property type="protein sequence ID" value="CAG81468"/>
    <property type="gene ID" value="YALI0_D25190g"/>
</dbReference>
<dbReference type="KEGG" id="yli:2910782"/>
<dbReference type="VEuPathDB" id="FungiDB:YALI0_D25190g"/>
<dbReference type="HOGENOM" id="CLU_000288_181_1_1"/>
<dbReference type="InParanoid" id="Q6C7U8"/>
<dbReference type="OMA" id="NWQIFVP"/>
<dbReference type="OrthoDB" id="73348at4891"/>
<dbReference type="Proteomes" id="UP000001300">
    <property type="component" value="Chromosome D"/>
</dbReference>
<dbReference type="GO" id="GO:0005935">
    <property type="term" value="C:cellular bud neck"/>
    <property type="evidence" value="ECO:0007669"/>
    <property type="project" value="EnsemblFungi"/>
</dbReference>
<dbReference type="GO" id="GO:0005737">
    <property type="term" value="C:cytoplasm"/>
    <property type="evidence" value="ECO:0000318"/>
    <property type="project" value="GO_Central"/>
</dbReference>
<dbReference type="GO" id="GO:0005634">
    <property type="term" value="C:nucleus"/>
    <property type="evidence" value="ECO:0000318"/>
    <property type="project" value="GO_Central"/>
</dbReference>
<dbReference type="GO" id="GO:1990860">
    <property type="term" value="C:Pho85-Pho80 CDK-cyclin complex"/>
    <property type="evidence" value="ECO:0007669"/>
    <property type="project" value="EnsemblFungi"/>
</dbReference>
<dbReference type="GO" id="GO:0005524">
    <property type="term" value="F:ATP binding"/>
    <property type="evidence" value="ECO:0007669"/>
    <property type="project" value="UniProtKB-KW"/>
</dbReference>
<dbReference type="GO" id="GO:0004693">
    <property type="term" value="F:cyclin-dependent protein serine/threonine kinase activity"/>
    <property type="evidence" value="ECO:0000318"/>
    <property type="project" value="GO_Central"/>
</dbReference>
<dbReference type="GO" id="GO:0106310">
    <property type="term" value="F:protein serine kinase activity"/>
    <property type="evidence" value="ECO:0007669"/>
    <property type="project" value="RHEA"/>
</dbReference>
<dbReference type="GO" id="GO:0006974">
    <property type="term" value="P:DNA damage response"/>
    <property type="evidence" value="ECO:0007669"/>
    <property type="project" value="EnsemblFungi"/>
</dbReference>
<dbReference type="GO" id="GO:0000082">
    <property type="term" value="P:G1/S transition of mitotic cell cycle"/>
    <property type="evidence" value="ECO:0007669"/>
    <property type="project" value="EnsemblFungi"/>
</dbReference>
<dbReference type="GO" id="GO:0055088">
    <property type="term" value="P:lipid homeostasis"/>
    <property type="evidence" value="ECO:0007669"/>
    <property type="project" value="EnsemblFungi"/>
</dbReference>
<dbReference type="GO" id="GO:0050849">
    <property type="term" value="P:negative regulation of calcium-mediated signaling"/>
    <property type="evidence" value="ECO:0007669"/>
    <property type="project" value="EnsemblFungi"/>
</dbReference>
<dbReference type="GO" id="GO:0045719">
    <property type="term" value="P:negative regulation of glycogen biosynthetic process"/>
    <property type="evidence" value="ECO:0007669"/>
    <property type="project" value="EnsemblFungi"/>
</dbReference>
<dbReference type="GO" id="GO:0016242">
    <property type="term" value="P:negative regulation of macroautophagy"/>
    <property type="evidence" value="ECO:0007669"/>
    <property type="project" value="EnsemblFungi"/>
</dbReference>
<dbReference type="GO" id="GO:0045936">
    <property type="term" value="P:negative regulation of phosphate metabolic process"/>
    <property type="evidence" value="ECO:0007669"/>
    <property type="project" value="EnsemblFungi"/>
</dbReference>
<dbReference type="GO" id="GO:0000122">
    <property type="term" value="P:negative regulation of transcription by RNA polymerase II"/>
    <property type="evidence" value="ECO:0007669"/>
    <property type="project" value="EnsemblFungi"/>
</dbReference>
<dbReference type="GO" id="GO:0016239">
    <property type="term" value="P:positive regulation of macroautophagy"/>
    <property type="evidence" value="ECO:0007669"/>
    <property type="project" value="EnsemblFungi"/>
</dbReference>
<dbReference type="GO" id="GO:0071073">
    <property type="term" value="P:positive regulation of phospholipid biosynthetic process"/>
    <property type="evidence" value="ECO:0007669"/>
    <property type="project" value="EnsemblFungi"/>
</dbReference>
<dbReference type="GO" id="GO:0031648">
    <property type="term" value="P:protein destabilization"/>
    <property type="evidence" value="ECO:0007669"/>
    <property type="project" value="EnsemblFungi"/>
</dbReference>
<dbReference type="GO" id="GO:1901987">
    <property type="term" value="P:regulation of cell cycle phase transition"/>
    <property type="evidence" value="ECO:0000318"/>
    <property type="project" value="GO_Central"/>
</dbReference>
<dbReference type="GO" id="GO:0051302">
    <property type="term" value="P:regulation of cell division"/>
    <property type="evidence" value="ECO:0007669"/>
    <property type="project" value="EnsemblFungi"/>
</dbReference>
<dbReference type="GO" id="GO:0032878">
    <property type="term" value="P:regulation of establishment or maintenance of cell polarity"/>
    <property type="evidence" value="ECO:0007669"/>
    <property type="project" value="EnsemblFungi"/>
</dbReference>
<dbReference type="GO" id="GO:0046822">
    <property type="term" value="P:regulation of nucleocytoplasmic transport"/>
    <property type="evidence" value="ECO:0007669"/>
    <property type="project" value="EnsemblFungi"/>
</dbReference>
<dbReference type="GO" id="GO:0032880">
    <property type="term" value="P:regulation of protein localization"/>
    <property type="evidence" value="ECO:0007669"/>
    <property type="project" value="EnsemblFungi"/>
</dbReference>
<dbReference type="FunFam" id="3.30.200.20:FF:000062">
    <property type="entry name" value="PHO system negative regulator"/>
    <property type="match status" value="1"/>
</dbReference>
<dbReference type="FunFam" id="1.10.510.10:FF:000410">
    <property type="entry name" value="Probable PHO85-cyclin-dependent protein kinase"/>
    <property type="match status" value="1"/>
</dbReference>
<dbReference type="Gene3D" id="3.30.200.20">
    <property type="entry name" value="Phosphorylase Kinase, domain 1"/>
    <property type="match status" value="1"/>
</dbReference>
<dbReference type="Gene3D" id="1.10.510.10">
    <property type="entry name" value="Transferase(Phosphotransferase) domain 1"/>
    <property type="match status" value="1"/>
</dbReference>
<dbReference type="InterPro" id="IPR050108">
    <property type="entry name" value="CDK"/>
</dbReference>
<dbReference type="InterPro" id="IPR011009">
    <property type="entry name" value="Kinase-like_dom_sf"/>
</dbReference>
<dbReference type="InterPro" id="IPR000719">
    <property type="entry name" value="Prot_kinase_dom"/>
</dbReference>
<dbReference type="InterPro" id="IPR017441">
    <property type="entry name" value="Protein_kinase_ATP_BS"/>
</dbReference>
<dbReference type="InterPro" id="IPR008271">
    <property type="entry name" value="Ser/Thr_kinase_AS"/>
</dbReference>
<dbReference type="PANTHER" id="PTHR24056">
    <property type="entry name" value="CELL DIVISION PROTEIN KINASE"/>
    <property type="match status" value="1"/>
</dbReference>
<dbReference type="PANTHER" id="PTHR24056:SF46">
    <property type="entry name" value="CYCLIN-DEPENDENT KINASE 5"/>
    <property type="match status" value="1"/>
</dbReference>
<dbReference type="Pfam" id="PF00069">
    <property type="entry name" value="Pkinase"/>
    <property type="match status" value="1"/>
</dbReference>
<dbReference type="SMART" id="SM00220">
    <property type="entry name" value="S_TKc"/>
    <property type="match status" value="1"/>
</dbReference>
<dbReference type="SUPFAM" id="SSF56112">
    <property type="entry name" value="Protein kinase-like (PK-like)"/>
    <property type="match status" value="1"/>
</dbReference>
<dbReference type="PROSITE" id="PS00107">
    <property type="entry name" value="PROTEIN_KINASE_ATP"/>
    <property type="match status" value="1"/>
</dbReference>
<dbReference type="PROSITE" id="PS50011">
    <property type="entry name" value="PROTEIN_KINASE_DOM"/>
    <property type="match status" value="1"/>
</dbReference>
<dbReference type="PROSITE" id="PS00108">
    <property type="entry name" value="PROTEIN_KINASE_ST"/>
    <property type="match status" value="1"/>
</dbReference>
<comment type="function">
    <text evidence="1">When phosphate concentrations are high it phosphorylates the PHO4 transcription factor thus establishing repression.</text>
</comment>
<comment type="catalytic activity">
    <reaction>
        <text>L-seryl-[protein] + ATP = O-phospho-L-seryl-[protein] + ADP + H(+)</text>
        <dbReference type="Rhea" id="RHEA:17989"/>
        <dbReference type="Rhea" id="RHEA-COMP:9863"/>
        <dbReference type="Rhea" id="RHEA-COMP:11604"/>
        <dbReference type="ChEBI" id="CHEBI:15378"/>
        <dbReference type="ChEBI" id="CHEBI:29999"/>
        <dbReference type="ChEBI" id="CHEBI:30616"/>
        <dbReference type="ChEBI" id="CHEBI:83421"/>
        <dbReference type="ChEBI" id="CHEBI:456216"/>
        <dbReference type="EC" id="2.7.11.22"/>
    </reaction>
</comment>
<comment type="catalytic activity">
    <reaction>
        <text>L-threonyl-[protein] + ATP = O-phospho-L-threonyl-[protein] + ADP + H(+)</text>
        <dbReference type="Rhea" id="RHEA:46608"/>
        <dbReference type="Rhea" id="RHEA-COMP:11060"/>
        <dbReference type="Rhea" id="RHEA-COMP:11605"/>
        <dbReference type="ChEBI" id="CHEBI:15378"/>
        <dbReference type="ChEBI" id="CHEBI:30013"/>
        <dbReference type="ChEBI" id="CHEBI:30616"/>
        <dbReference type="ChEBI" id="CHEBI:61977"/>
        <dbReference type="ChEBI" id="CHEBI:456216"/>
        <dbReference type="EC" id="2.7.11.22"/>
    </reaction>
</comment>
<comment type="subunit">
    <text evidence="1">Interacts with a number of cyclins.</text>
</comment>
<comment type="similarity">
    <text evidence="4">Belongs to the protein kinase superfamily. CMGC Ser/Thr protein kinase family. CDC2/CDKX subfamily.</text>
</comment>
<protein>
    <recommendedName>
        <fullName>Negative regulator of the PHO system</fullName>
        <ecNumber>2.7.11.22</ecNumber>
    </recommendedName>
    <alternativeName>
        <fullName>Serine/threonine-protein kinase PHO85</fullName>
    </alternativeName>
</protein>
<name>PHO85_YARLI</name>